<feature type="chain" id="PRO_0000079699" description="64 kDa cell wall protein">
    <location>
        <begin position="1"/>
        <end position="10" status="greater than"/>
    </location>
</feature>
<feature type="non-terminal residue" evidence="2">
    <location>
        <position position="10"/>
    </location>
</feature>
<sequence>MREIEHIPPP</sequence>
<proteinExistence type="evidence at protein level"/>
<keyword id="KW-0134">Cell wall</keyword>
<keyword id="KW-0903">Direct protein sequencing</keyword>
<keyword id="KW-0964">Secreted</keyword>
<evidence type="ECO:0000269" key="1">
    <source>
    </source>
</evidence>
<evidence type="ECO:0000303" key="2">
    <source>
    </source>
</evidence>
<evidence type="ECO:0000305" key="3"/>
<name>CWP23_ARATH</name>
<protein>
    <recommendedName>
        <fullName>64 kDa cell wall protein</fullName>
    </recommendedName>
</protein>
<dbReference type="GO" id="GO:0005576">
    <property type="term" value="C:extracellular region"/>
    <property type="evidence" value="ECO:0007669"/>
    <property type="project" value="UniProtKB-KW"/>
</dbReference>
<dbReference type="PROSITE" id="PS00228">
    <property type="entry name" value="TUBULIN_B_AUTOREG"/>
    <property type="match status" value="1"/>
</dbReference>
<comment type="subcellular location">
    <subcellularLocation>
        <location evidence="1">Secreted</location>
        <location evidence="1">Cell wall</location>
    </subcellularLocation>
</comment>
<accession>P80844</accession>
<reference evidence="3" key="1">
    <citation type="journal article" date="1997" name="J. Biol. Chem.">
        <title>Differential extraction and protein sequencing reveals major differences in patterns of primary cell wall proteins from plants.</title>
        <authorList>
            <person name="Robertson D."/>
            <person name="Mitchell G.P."/>
            <person name="Gilroy J.S."/>
            <person name="Gerrish C."/>
            <person name="Bolwell G.P."/>
            <person name="Slabas A.R."/>
        </authorList>
    </citation>
    <scope>PROTEIN SEQUENCE</scope>
    <scope>SUBCELLULAR LOCATION</scope>
    <source>
        <strain>cv. Landsberg erecta</strain>
    </source>
</reference>
<organism>
    <name type="scientific">Arabidopsis thaliana</name>
    <name type="common">Mouse-ear cress</name>
    <dbReference type="NCBI Taxonomy" id="3702"/>
    <lineage>
        <taxon>Eukaryota</taxon>
        <taxon>Viridiplantae</taxon>
        <taxon>Streptophyta</taxon>
        <taxon>Embryophyta</taxon>
        <taxon>Tracheophyta</taxon>
        <taxon>Spermatophyta</taxon>
        <taxon>Magnoliopsida</taxon>
        <taxon>eudicotyledons</taxon>
        <taxon>Gunneridae</taxon>
        <taxon>Pentapetalae</taxon>
        <taxon>rosids</taxon>
        <taxon>malvids</taxon>
        <taxon>Brassicales</taxon>
        <taxon>Brassicaceae</taxon>
        <taxon>Camelineae</taxon>
        <taxon>Arabidopsis</taxon>
    </lineage>
</organism>